<name>SYT_LISMH</name>
<evidence type="ECO:0000255" key="1">
    <source>
        <dbReference type="HAMAP-Rule" id="MF_00184"/>
    </source>
</evidence>
<evidence type="ECO:0000255" key="2">
    <source>
        <dbReference type="PROSITE-ProRule" id="PRU01228"/>
    </source>
</evidence>
<organism>
    <name type="scientific">Listeria monocytogenes serotype 4a (strain HCC23)</name>
    <dbReference type="NCBI Taxonomy" id="552536"/>
    <lineage>
        <taxon>Bacteria</taxon>
        <taxon>Bacillati</taxon>
        <taxon>Bacillota</taxon>
        <taxon>Bacilli</taxon>
        <taxon>Bacillales</taxon>
        <taxon>Listeriaceae</taxon>
        <taxon>Listeria</taxon>
    </lineage>
</organism>
<dbReference type="EC" id="6.1.1.3" evidence="1"/>
<dbReference type="EMBL" id="CP001175">
    <property type="protein sequence ID" value="ACK39358.1"/>
    <property type="molecule type" value="Genomic_DNA"/>
</dbReference>
<dbReference type="RefSeq" id="WP_003725686.1">
    <property type="nucleotide sequence ID" value="NC_011660.1"/>
</dbReference>
<dbReference type="SMR" id="B8DHI9"/>
<dbReference type="KEGG" id="lmh:LMHCC_1010"/>
<dbReference type="HOGENOM" id="CLU_008554_0_1_9"/>
<dbReference type="GO" id="GO:0005737">
    <property type="term" value="C:cytoplasm"/>
    <property type="evidence" value="ECO:0007669"/>
    <property type="project" value="UniProtKB-SubCell"/>
</dbReference>
<dbReference type="GO" id="GO:0005524">
    <property type="term" value="F:ATP binding"/>
    <property type="evidence" value="ECO:0007669"/>
    <property type="project" value="UniProtKB-UniRule"/>
</dbReference>
<dbReference type="GO" id="GO:0140096">
    <property type="term" value="F:catalytic activity, acting on a protein"/>
    <property type="evidence" value="ECO:0007669"/>
    <property type="project" value="UniProtKB-ARBA"/>
</dbReference>
<dbReference type="GO" id="GO:0046872">
    <property type="term" value="F:metal ion binding"/>
    <property type="evidence" value="ECO:0007669"/>
    <property type="project" value="UniProtKB-KW"/>
</dbReference>
<dbReference type="GO" id="GO:0004829">
    <property type="term" value="F:threonine-tRNA ligase activity"/>
    <property type="evidence" value="ECO:0007669"/>
    <property type="project" value="UniProtKB-UniRule"/>
</dbReference>
<dbReference type="GO" id="GO:0016740">
    <property type="term" value="F:transferase activity"/>
    <property type="evidence" value="ECO:0007669"/>
    <property type="project" value="UniProtKB-ARBA"/>
</dbReference>
<dbReference type="GO" id="GO:0000049">
    <property type="term" value="F:tRNA binding"/>
    <property type="evidence" value="ECO:0007669"/>
    <property type="project" value="UniProtKB-KW"/>
</dbReference>
<dbReference type="GO" id="GO:0006435">
    <property type="term" value="P:threonyl-tRNA aminoacylation"/>
    <property type="evidence" value="ECO:0007669"/>
    <property type="project" value="UniProtKB-UniRule"/>
</dbReference>
<dbReference type="CDD" id="cd01667">
    <property type="entry name" value="TGS_ThrRS"/>
    <property type="match status" value="1"/>
</dbReference>
<dbReference type="CDD" id="cd00860">
    <property type="entry name" value="ThrRS_anticodon"/>
    <property type="match status" value="1"/>
</dbReference>
<dbReference type="CDD" id="cd00771">
    <property type="entry name" value="ThrRS_core"/>
    <property type="match status" value="1"/>
</dbReference>
<dbReference type="FunFam" id="3.10.20.30:FF:000005">
    <property type="entry name" value="Threonine--tRNA ligase"/>
    <property type="match status" value="1"/>
</dbReference>
<dbReference type="FunFam" id="3.30.54.20:FF:000002">
    <property type="entry name" value="Threonine--tRNA ligase"/>
    <property type="match status" value="1"/>
</dbReference>
<dbReference type="FunFam" id="3.30.930.10:FF:000002">
    <property type="entry name" value="Threonine--tRNA ligase"/>
    <property type="match status" value="1"/>
</dbReference>
<dbReference type="FunFam" id="3.40.50.800:FF:000001">
    <property type="entry name" value="Threonine--tRNA ligase"/>
    <property type="match status" value="1"/>
</dbReference>
<dbReference type="FunFam" id="3.30.980.10:FF:000005">
    <property type="entry name" value="Threonyl-tRNA synthetase, mitochondrial"/>
    <property type="match status" value="1"/>
</dbReference>
<dbReference type="Gene3D" id="3.10.20.30">
    <property type="match status" value="1"/>
</dbReference>
<dbReference type="Gene3D" id="3.30.54.20">
    <property type="match status" value="1"/>
</dbReference>
<dbReference type="Gene3D" id="3.40.50.800">
    <property type="entry name" value="Anticodon-binding domain"/>
    <property type="match status" value="1"/>
</dbReference>
<dbReference type="Gene3D" id="3.30.930.10">
    <property type="entry name" value="Bira Bifunctional Protein, Domain 2"/>
    <property type="match status" value="1"/>
</dbReference>
<dbReference type="Gene3D" id="3.30.980.10">
    <property type="entry name" value="Threonyl-trna Synthetase, Chain A, domain 2"/>
    <property type="match status" value="1"/>
</dbReference>
<dbReference type="HAMAP" id="MF_00184">
    <property type="entry name" value="Thr_tRNA_synth"/>
    <property type="match status" value="1"/>
</dbReference>
<dbReference type="InterPro" id="IPR002314">
    <property type="entry name" value="aa-tRNA-synt_IIb"/>
</dbReference>
<dbReference type="InterPro" id="IPR006195">
    <property type="entry name" value="aa-tRNA-synth_II"/>
</dbReference>
<dbReference type="InterPro" id="IPR045864">
    <property type="entry name" value="aa-tRNA-synth_II/BPL/LPL"/>
</dbReference>
<dbReference type="InterPro" id="IPR004154">
    <property type="entry name" value="Anticodon-bd"/>
</dbReference>
<dbReference type="InterPro" id="IPR036621">
    <property type="entry name" value="Anticodon-bd_dom_sf"/>
</dbReference>
<dbReference type="InterPro" id="IPR012675">
    <property type="entry name" value="Beta-grasp_dom_sf"/>
</dbReference>
<dbReference type="InterPro" id="IPR004095">
    <property type="entry name" value="TGS"/>
</dbReference>
<dbReference type="InterPro" id="IPR012676">
    <property type="entry name" value="TGS-like"/>
</dbReference>
<dbReference type="InterPro" id="IPR002320">
    <property type="entry name" value="Thr-tRNA-ligase_IIa"/>
</dbReference>
<dbReference type="InterPro" id="IPR018163">
    <property type="entry name" value="Thr/Ala-tRNA-synth_IIc_edit"/>
</dbReference>
<dbReference type="InterPro" id="IPR047246">
    <property type="entry name" value="ThrRS_anticodon"/>
</dbReference>
<dbReference type="InterPro" id="IPR033728">
    <property type="entry name" value="ThrRS_core"/>
</dbReference>
<dbReference type="InterPro" id="IPR012947">
    <property type="entry name" value="tRNA_SAD"/>
</dbReference>
<dbReference type="NCBIfam" id="TIGR00418">
    <property type="entry name" value="thrS"/>
    <property type="match status" value="1"/>
</dbReference>
<dbReference type="PANTHER" id="PTHR11451:SF56">
    <property type="entry name" value="THREONINE--TRNA LIGASE 1"/>
    <property type="match status" value="1"/>
</dbReference>
<dbReference type="PANTHER" id="PTHR11451">
    <property type="entry name" value="THREONINE-TRNA LIGASE"/>
    <property type="match status" value="1"/>
</dbReference>
<dbReference type="Pfam" id="PF03129">
    <property type="entry name" value="HGTP_anticodon"/>
    <property type="match status" value="1"/>
</dbReference>
<dbReference type="Pfam" id="PF02824">
    <property type="entry name" value="TGS"/>
    <property type="match status" value="1"/>
</dbReference>
<dbReference type="Pfam" id="PF00587">
    <property type="entry name" value="tRNA-synt_2b"/>
    <property type="match status" value="1"/>
</dbReference>
<dbReference type="Pfam" id="PF07973">
    <property type="entry name" value="tRNA_SAD"/>
    <property type="match status" value="1"/>
</dbReference>
<dbReference type="PRINTS" id="PR01047">
    <property type="entry name" value="TRNASYNTHTHR"/>
</dbReference>
<dbReference type="SMART" id="SM00863">
    <property type="entry name" value="tRNA_SAD"/>
    <property type="match status" value="1"/>
</dbReference>
<dbReference type="SUPFAM" id="SSF52954">
    <property type="entry name" value="Class II aaRS ABD-related"/>
    <property type="match status" value="1"/>
</dbReference>
<dbReference type="SUPFAM" id="SSF55681">
    <property type="entry name" value="Class II aaRS and biotin synthetases"/>
    <property type="match status" value="1"/>
</dbReference>
<dbReference type="SUPFAM" id="SSF81271">
    <property type="entry name" value="TGS-like"/>
    <property type="match status" value="1"/>
</dbReference>
<dbReference type="SUPFAM" id="SSF55186">
    <property type="entry name" value="ThrRS/AlaRS common domain"/>
    <property type="match status" value="1"/>
</dbReference>
<dbReference type="PROSITE" id="PS50862">
    <property type="entry name" value="AA_TRNA_LIGASE_II"/>
    <property type="match status" value="1"/>
</dbReference>
<dbReference type="PROSITE" id="PS51880">
    <property type="entry name" value="TGS"/>
    <property type="match status" value="1"/>
</dbReference>
<proteinExistence type="inferred from homology"/>
<sequence>MKITFPDGAVKEFEPGVSTADIAASISPGLKKKALAGKLNGELLDLVTPIHEDGAIEIVTPDHEDALGILRHSTAHLMAQALKRLYPDVKFGVGPAIESGFYYDIDTEAVISDESLVEIEKEMQKIVRENVPIEREVVSREEAIKRFKAIGDQYKLELIEAIPEDETVTIYTQGEFFDLCRGVHVPSTGKIQVFKLLSVAGAYWRGDSNNKMLQRIYGTAFFDKNGLKEFIQMQKEAKERDHRKLGKELDLFANSIEVGQGLPLWLPKGATIRRVIERYIVDKEERLGYNHVYTPIMANVELYKTSGHWDHYHEDMFPTMKMDNEELVLRPMNCPHHMMIYKNDIHSYRELPIRIAELGMMHRYEMSGALSGLQRVRGMTLNDAHVFVRPDQIKDEFKRVVELILEVYKDFDIKDYSFRLSYRDPKNTEKYFDDDAMWEKAQAMLKSAMDEMEMDYFEAEGEAAFYGPKLDVQVKTAIGKEETLSTVQLDFLLPERFDLTYIGEDGEKHRPVVIHRGVVSTMERFVAYLIEEYKGAFPTWLAPVQMELIPVNADAHLDYAKGVQDKLQRAGLRAEVDDRNEKLGYKIREAQTKKIPYALVLGDQEVEAGSVNVRRYGSKDSETMDLDAFIAQVVAEVSKY</sequence>
<reference key="1">
    <citation type="journal article" date="2011" name="J. Bacteriol.">
        <title>Genome sequence of lineage III Listeria monocytogenes strain HCC23.</title>
        <authorList>
            <person name="Steele C.L."/>
            <person name="Donaldson J.R."/>
            <person name="Paul D."/>
            <person name="Banes M.M."/>
            <person name="Arick T."/>
            <person name="Bridges S.M."/>
            <person name="Lawrence M.L."/>
        </authorList>
    </citation>
    <scope>NUCLEOTIDE SEQUENCE [LARGE SCALE GENOMIC DNA]</scope>
    <source>
        <strain>HCC23</strain>
    </source>
</reference>
<protein>
    <recommendedName>
        <fullName evidence="1">Threonine--tRNA ligase</fullName>
        <ecNumber evidence="1">6.1.1.3</ecNumber>
    </recommendedName>
    <alternativeName>
        <fullName evidence="1">Threonyl-tRNA synthetase</fullName>
        <shortName evidence="1">ThrRS</shortName>
    </alternativeName>
</protein>
<comment type="function">
    <text evidence="1">Catalyzes the attachment of threonine to tRNA(Thr) in a two-step reaction: L-threonine is first activated by ATP to form Thr-AMP and then transferred to the acceptor end of tRNA(Thr). Also edits incorrectly charged L-seryl-tRNA(Thr).</text>
</comment>
<comment type="catalytic activity">
    <reaction evidence="1">
        <text>tRNA(Thr) + L-threonine + ATP = L-threonyl-tRNA(Thr) + AMP + diphosphate + H(+)</text>
        <dbReference type="Rhea" id="RHEA:24624"/>
        <dbReference type="Rhea" id="RHEA-COMP:9670"/>
        <dbReference type="Rhea" id="RHEA-COMP:9704"/>
        <dbReference type="ChEBI" id="CHEBI:15378"/>
        <dbReference type="ChEBI" id="CHEBI:30616"/>
        <dbReference type="ChEBI" id="CHEBI:33019"/>
        <dbReference type="ChEBI" id="CHEBI:57926"/>
        <dbReference type="ChEBI" id="CHEBI:78442"/>
        <dbReference type="ChEBI" id="CHEBI:78534"/>
        <dbReference type="ChEBI" id="CHEBI:456215"/>
        <dbReference type="EC" id="6.1.1.3"/>
    </reaction>
</comment>
<comment type="cofactor">
    <cofactor evidence="1">
        <name>Zn(2+)</name>
        <dbReference type="ChEBI" id="CHEBI:29105"/>
    </cofactor>
    <text evidence="1">Binds 1 zinc ion per subunit.</text>
</comment>
<comment type="subunit">
    <text evidence="1">Homodimer.</text>
</comment>
<comment type="subcellular location">
    <subcellularLocation>
        <location evidence="1">Cytoplasm</location>
    </subcellularLocation>
</comment>
<comment type="similarity">
    <text evidence="1">Belongs to the class-II aminoacyl-tRNA synthetase family.</text>
</comment>
<keyword id="KW-0030">Aminoacyl-tRNA synthetase</keyword>
<keyword id="KW-0067">ATP-binding</keyword>
<keyword id="KW-0963">Cytoplasm</keyword>
<keyword id="KW-0436">Ligase</keyword>
<keyword id="KW-0479">Metal-binding</keyword>
<keyword id="KW-0547">Nucleotide-binding</keyword>
<keyword id="KW-0648">Protein biosynthesis</keyword>
<keyword id="KW-0694">RNA-binding</keyword>
<keyword id="KW-0820">tRNA-binding</keyword>
<keyword id="KW-0862">Zinc</keyword>
<accession>B8DHI9</accession>
<feature type="chain" id="PRO_1000199555" description="Threonine--tRNA ligase">
    <location>
        <begin position="1"/>
        <end position="640"/>
    </location>
</feature>
<feature type="domain" description="TGS" evidence="2">
    <location>
        <begin position="1"/>
        <end position="60"/>
    </location>
</feature>
<feature type="region of interest" description="Catalytic" evidence="1">
    <location>
        <begin position="241"/>
        <end position="538"/>
    </location>
</feature>
<feature type="binding site" evidence="1">
    <location>
        <position position="334"/>
    </location>
    <ligand>
        <name>Zn(2+)</name>
        <dbReference type="ChEBI" id="CHEBI:29105"/>
    </ligand>
</feature>
<feature type="binding site" evidence="1">
    <location>
        <position position="385"/>
    </location>
    <ligand>
        <name>Zn(2+)</name>
        <dbReference type="ChEBI" id="CHEBI:29105"/>
    </ligand>
</feature>
<feature type="binding site" evidence="1">
    <location>
        <position position="515"/>
    </location>
    <ligand>
        <name>Zn(2+)</name>
        <dbReference type="ChEBI" id="CHEBI:29105"/>
    </ligand>
</feature>
<gene>
    <name evidence="1" type="primary">thrS</name>
    <name type="ordered locus">LMHCC_1010</name>
</gene>